<reference key="1">
    <citation type="journal article" date="2001" name="Lancet">
        <title>Whole genome sequencing of meticillin-resistant Staphylococcus aureus.</title>
        <authorList>
            <person name="Kuroda M."/>
            <person name="Ohta T."/>
            <person name="Uchiyama I."/>
            <person name="Baba T."/>
            <person name="Yuzawa H."/>
            <person name="Kobayashi I."/>
            <person name="Cui L."/>
            <person name="Oguchi A."/>
            <person name="Aoki K."/>
            <person name="Nagai Y."/>
            <person name="Lian J.-Q."/>
            <person name="Ito T."/>
            <person name="Kanamori M."/>
            <person name="Matsumaru H."/>
            <person name="Maruyama A."/>
            <person name="Murakami H."/>
            <person name="Hosoyama A."/>
            <person name="Mizutani-Ui Y."/>
            <person name="Takahashi N.K."/>
            <person name="Sawano T."/>
            <person name="Inoue R."/>
            <person name="Kaito C."/>
            <person name="Sekimizu K."/>
            <person name="Hirakawa H."/>
            <person name="Kuhara S."/>
            <person name="Goto S."/>
            <person name="Yabuzaki J."/>
            <person name="Kanehisa M."/>
            <person name="Yamashita A."/>
            <person name="Oshima K."/>
            <person name="Furuya K."/>
            <person name="Yoshino C."/>
            <person name="Shiba T."/>
            <person name="Hattori M."/>
            <person name="Ogasawara N."/>
            <person name="Hayashi H."/>
            <person name="Hiramatsu K."/>
        </authorList>
    </citation>
    <scope>NUCLEOTIDE SEQUENCE [LARGE SCALE GENOMIC DNA]</scope>
    <source>
        <strain>Mu50 / ATCC 700699</strain>
    </source>
</reference>
<gene>
    <name evidence="1" type="primary">leuS</name>
    <name type="ordered locus">SAV1760</name>
</gene>
<dbReference type="EC" id="6.1.1.4" evidence="1"/>
<dbReference type="EMBL" id="BA000017">
    <property type="protein sequence ID" value="BAB57922.1"/>
    <property type="molecule type" value="Genomic_DNA"/>
</dbReference>
<dbReference type="SMR" id="P67512"/>
<dbReference type="KEGG" id="sav:SAV1760"/>
<dbReference type="HOGENOM" id="CLU_004427_0_0_9"/>
<dbReference type="PhylomeDB" id="P67512"/>
<dbReference type="Proteomes" id="UP000002481">
    <property type="component" value="Chromosome"/>
</dbReference>
<dbReference type="GO" id="GO:0005829">
    <property type="term" value="C:cytosol"/>
    <property type="evidence" value="ECO:0007669"/>
    <property type="project" value="TreeGrafter"/>
</dbReference>
<dbReference type="GO" id="GO:0002161">
    <property type="term" value="F:aminoacyl-tRNA deacylase activity"/>
    <property type="evidence" value="ECO:0007669"/>
    <property type="project" value="InterPro"/>
</dbReference>
<dbReference type="GO" id="GO:0005524">
    <property type="term" value="F:ATP binding"/>
    <property type="evidence" value="ECO:0007669"/>
    <property type="project" value="UniProtKB-UniRule"/>
</dbReference>
<dbReference type="GO" id="GO:0004823">
    <property type="term" value="F:leucine-tRNA ligase activity"/>
    <property type="evidence" value="ECO:0007669"/>
    <property type="project" value="UniProtKB-UniRule"/>
</dbReference>
<dbReference type="GO" id="GO:0006429">
    <property type="term" value="P:leucyl-tRNA aminoacylation"/>
    <property type="evidence" value="ECO:0007669"/>
    <property type="project" value="UniProtKB-UniRule"/>
</dbReference>
<dbReference type="CDD" id="cd07958">
    <property type="entry name" value="Anticodon_Ia_Leu_BEm"/>
    <property type="match status" value="1"/>
</dbReference>
<dbReference type="CDD" id="cd00812">
    <property type="entry name" value="LeuRS_core"/>
    <property type="match status" value="1"/>
</dbReference>
<dbReference type="FunFam" id="1.10.730.10:FF:000012">
    <property type="entry name" value="Leucine--tRNA ligase"/>
    <property type="match status" value="1"/>
</dbReference>
<dbReference type="FunFam" id="1.10.730.10:FF:000018">
    <property type="entry name" value="Leucine--tRNA ligase"/>
    <property type="match status" value="1"/>
</dbReference>
<dbReference type="FunFam" id="3.10.20.590:FF:000001">
    <property type="entry name" value="Leucine--tRNA ligase"/>
    <property type="match status" value="1"/>
</dbReference>
<dbReference type="FunFam" id="3.40.50.620:FF:000056">
    <property type="entry name" value="Leucine--tRNA ligase"/>
    <property type="match status" value="1"/>
</dbReference>
<dbReference type="FunFam" id="3.40.50.620:FF:000077">
    <property type="entry name" value="Leucine--tRNA ligase"/>
    <property type="match status" value="1"/>
</dbReference>
<dbReference type="Gene3D" id="3.10.20.590">
    <property type="match status" value="1"/>
</dbReference>
<dbReference type="Gene3D" id="3.40.50.620">
    <property type="entry name" value="HUPs"/>
    <property type="match status" value="2"/>
</dbReference>
<dbReference type="Gene3D" id="1.10.730.10">
    <property type="entry name" value="Isoleucyl-tRNA Synthetase, Domain 1"/>
    <property type="match status" value="1"/>
</dbReference>
<dbReference type="HAMAP" id="MF_00049_B">
    <property type="entry name" value="Leu_tRNA_synth_B"/>
    <property type="match status" value="1"/>
</dbReference>
<dbReference type="InterPro" id="IPR001412">
    <property type="entry name" value="aa-tRNA-synth_I_CS"/>
</dbReference>
<dbReference type="InterPro" id="IPR002300">
    <property type="entry name" value="aa-tRNA-synth_Ia"/>
</dbReference>
<dbReference type="InterPro" id="IPR002302">
    <property type="entry name" value="Leu-tRNA-ligase"/>
</dbReference>
<dbReference type="InterPro" id="IPR025709">
    <property type="entry name" value="Leu_tRNA-synth_edit"/>
</dbReference>
<dbReference type="InterPro" id="IPR013155">
    <property type="entry name" value="M/V/L/I-tRNA-synth_anticd-bd"/>
</dbReference>
<dbReference type="InterPro" id="IPR015413">
    <property type="entry name" value="Methionyl/Leucyl_tRNA_Synth"/>
</dbReference>
<dbReference type="InterPro" id="IPR014729">
    <property type="entry name" value="Rossmann-like_a/b/a_fold"/>
</dbReference>
<dbReference type="InterPro" id="IPR009080">
    <property type="entry name" value="tRNAsynth_Ia_anticodon-bd"/>
</dbReference>
<dbReference type="InterPro" id="IPR009008">
    <property type="entry name" value="Val/Leu/Ile-tRNA-synth_edit"/>
</dbReference>
<dbReference type="NCBIfam" id="TIGR00396">
    <property type="entry name" value="leuS_bact"/>
    <property type="match status" value="1"/>
</dbReference>
<dbReference type="PANTHER" id="PTHR43740:SF2">
    <property type="entry name" value="LEUCINE--TRNA LIGASE, MITOCHONDRIAL"/>
    <property type="match status" value="1"/>
</dbReference>
<dbReference type="PANTHER" id="PTHR43740">
    <property type="entry name" value="LEUCYL-TRNA SYNTHETASE"/>
    <property type="match status" value="1"/>
</dbReference>
<dbReference type="Pfam" id="PF08264">
    <property type="entry name" value="Anticodon_1"/>
    <property type="match status" value="1"/>
</dbReference>
<dbReference type="Pfam" id="PF00133">
    <property type="entry name" value="tRNA-synt_1"/>
    <property type="match status" value="1"/>
</dbReference>
<dbReference type="Pfam" id="PF13603">
    <property type="entry name" value="tRNA-synt_1_2"/>
    <property type="match status" value="1"/>
</dbReference>
<dbReference type="Pfam" id="PF09334">
    <property type="entry name" value="tRNA-synt_1g"/>
    <property type="match status" value="1"/>
</dbReference>
<dbReference type="PRINTS" id="PR00985">
    <property type="entry name" value="TRNASYNTHLEU"/>
</dbReference>
<dbReference type="SUPFAM" id="SSF47323">
    <property type="entry name" value="Anticodon-binding domain of a subclass of class I aminoacyl-tRNA synthetases"/>
    <property type="match status" value="1"/>
</dbReference>
<dbReference type="SUPFAM" id="SSF52374">
    <property type="entry name" value="Nucleotidylyl transferase"/>
    <property type="match status" value="1"/>
</dbReference>
<dbReference type="SUPFAM" id="SSF50677">
    <property type="entry name" value="ValRS/IleRS/LeuRS editing domain"/>
    <property type="match status" value="1"/>
</dbReference>
<dbReference type="PROSITE" id="PS00178">
    <property type="entry name" value="AA_TRNA_LIGASE_I"/>
    <property type="match status" value="1"/>
</dbReference>
<name>SYL_STAAM</name>
<comment type="catalytic activity">
    <reaction evidence="1">
        <text>tRNA(Leu) + L-leucine + ATP = L-leucyl-tRNA(Leu) + AMP + diphosphate</text>
        <dbReference type="Rhea" id="RHEA:11688"/>
        <dbReference type="Rhea" id="RHEA-COMP:9613"/>
        <dbReference type="Rhea" id="RHEA-COMP:9622"/>
        <dbReference type="ChEBI" id="CHEBI:30616"/>
        <dbReference type="ChEBI" id="CHEBI:33019"/>
        <dbReference type="ChEBI" id="CHEBI:57427"/>
        <dbReference type="ChEBI" id="CHEBI:78442"/>
        <dbReference type="ChEBI" id="CHEBI:78494"/>
        <dbReference type="ChEBI" id="CHEBI:456215"/>
        <dbReference type="EC" id="6.1.1.4"/>
    </reaction>
</comment>
<comment type="subcellular location">
    <subcellularLocation>
        <location evidence="1">Cytoplasm</location>
    </subcellularLocation>
</comment>
<comment type="similarity">
    <text evidence="1">Belongs to the class-I aminoacyl-tRNA synthetase family.</text>
</comment>
<evidence type="ECO:0000255" key="1">
    <source>
        <dbReference type="HAMAP-Rule" id="MF_00049"/>
    </source>
</evidence>
<protein>
    <recommendedName>
        <fullName evidence="1">Leucine--tRNA ligase</fullName>
        <ecNumber evidence="1">6.1.1.4</ecNumber>
    </recommendedName>
    <alternativeName>
        <fullName evidence="1">Leucyl-tRNA synthetase</fullName>
        <shortName evidence="1">LeuRS</shortName>
    </alternativeName>
</protein>
<proteinExistence type="inferred from homology"/>
<organism>
    <name type="scientific">Staphylococcus aureus (strain Mu50 / ATCC 700699)</name>
    <dbReference type="NCBI Taxonomy" id="158878"/>
    <lineage>
        <taxon>Bacteria</taxon>
        <taxon>Bacillati</taxon>
        <taxon>Bacillota</taxon>
        <taxon>Bacilli</taxon>
        <taxon>Bacillales</taxon>
        <taxon>Staphylococcaceae</taxon>
        <taxon>Staphylococcus</taxon>
    </lineage>
</organism>
<sequence>MNYNHNQIEKKWQDYWDENKTFKTNDNLGQKKFYALDMFPYPSGAGLHVGHPEGYTATDIISRYKRMQGYNVLHPMGWDAFGLPAEQYALDTGNDPREFTKKNIQTFKRQIKELGFSYDWDREVNTTDPEYYKWTQWIFIQLYNKGLAYVDEVAVNWCPALGTVLSNEEVIDGVSERGGHPVYRKPMKQWVLKITEYADQLLADLDDLDWPESLKDMQRNWIGRSEGAKVSFDVDNTEGKVEVFTTRPDTIYGASFLVLSPEHALVNSITTDEYKEKVKAYQTEASKKSDLERTDLAKDKSGVFTGAYAINPLSGEKVQIWIADYVLSTYGTGAIMAVPAHDDRDYEFAKKFDLPIIEVIEGGNVEEAAYTGEGKHINSGELDGLENEAAITKAIQLLEQKGAGEKKVNYKLRDWLFSRQRYWGEPIPVIHWEDGTMTTVPEEELPLLLPETDEIKPSGTGESPLANIDSFVNVVDEKTGMKGRRETNTMPQWAGSCWYYLRYIDPKNENMLADPEKLKHWLPVDLYIGGVEHAVLHLLYARFWHKVLYDLGIVPTKEPFQKLFNQGMILGEGNEKMSKSKGNVINPDDIVQSHGADTLRLYEMFMGPLDAAIAWSEKGLDGSRRFLDRVWRLMVNEDGTLSSKIVTTNNKSLDKVYNQTVKKVTEDFETLGFNTAISQLMVFINECYKVDEVYKPYIEGFVKMLAPIAPHIGEELWSKLGHEESITYQPWPTYDEALLVDDEVEIVVQVNGKLRAKIKIAKDTSKEEMQEIALSNDNVKASIEGKDIMKVIAVPQKLVNIVAK</sequence>
<keyword id="KW-0030">Aminoacyl-tRNA synthetase</keyword>
<keyword id="KW-0067">ATP-binding</keyword>
<keyword id="KW-0963">Cytoplasm</keyword>
<keyword id="KW-0436">Ligase</keyword>
<keyword id="KW-0547">Nucleotide-binding</keyword>
<keyword id="KW-0648">Protein biosynthesis</keyword>
<accession>P67512</accession>
<accession>Q99TA8</accession>
<feature type="chain" id="PRO_0000152083" description="Leucine--tRNA ligase">
    <location>
        <begin position="1"/>
        <end position="804"/>
    </location>
</feature>
<feature type="short sequence motif" description="'HIGH' region">
    <location>
        <begin position="40"/>
        <end position="51"/>
    </location>
</feature>
<feature type="short sequence motif" description="'KMSKS' region">
    <location>
        <begin position="576"/>
        <end position="580"/>
    </location>
</feature>
<feature type="binding site" evidence="1">
    <location>
        <position position="579"/>
    </location>
    <ligand>
        <name>ATP</name>
        <dbReference type="ChEBI" id="CHEBI:30616"/>
    </ligand>
</feature>